<proteinExistence type="inferred from homology"/>
<feature type="signal peptide" evidence="1">
    <location>
        <begin position="1"/>
        <end position="86"/>
    </location>
</feature>
<feature type="chain" id="PRO_0000038171" description="Envelope glycoprotein B">
    <location>
        <begin position="87"/>
        <end position="980"/>
    </location>
</feature>
<feature type="topological domain" description="Virion surface" evidence="2">
    <location>
        <begin position="87"/>
        <end position="849"/>
    </location>
</feature>
<feature type="transmembrane region" description="Helical" evidence="2">
    <location>
        <begin position="850"/>
        <end position="870"/>
    </location>
</feature>
<feature type="topological domain" description="Intravirion" evidence="2">
    <location>
        <begin position="871"/>
        <end position="980"/>
    </location>
</feature>
<feature type="region of interest" description="Disordered" evidence="3">
    <location>
        <begin position="1"/>
        <end position="20"/>
    </location>
</feature>
<feature type="region of interest" description="Disordered" evidence="3">
    <location>
        <begin position="88"/>
        <end position="118"/>
    </location>
</feature>
<feature type="region of interest" description="Involved in fusion and/or binding to host membrane" evidence="2">
    <location>
        <begin position="197"/>
        <end position="203"/>
    </location>
</feature>
<feature type="region of interest" description="Involved in fusion and/or binding to host membrane" evidence="2">
    <location>
        <begin position="282"/>
        <end position="290"/>
    </location>
</feature>
<feature type="region of interest" description="Disordered" evidence="3">
    <location>
        <begin position="505"/>
        <end position="535"/>
    </location>
</feature>
<feature type="region of interest" description="Hydrophobic membrane proximal region" evidence="2">
    <location>
        <begin position="794"/>
        <end position="847"/>
    </location>
</feature>
<feature type="region of interest" description="Hydrophobic membrane proximal region">
    <location>
        <begin position="823"/>
        <end position="843"/>
    </location>
</feature>
<feature type="short sequence motif" description="Golgi targeting" evidence="2">
    <location>
        <begin position="925"/>
        <end position="928"/>
    </location>
</feature>
<feature type="short sequence motif" description="Internalization motif" evidence="2">
    <location>
        <begin position="965"/>
        <end position="968"/>
    </location>
</feature>
<feature type="compositionally biased region" description="Polar residues" evidence="3">
    <location>
        <begin position="1"/>
        <end position="14"/>
    </location>
</feature>
<feature type="compositionally biased region" description="Low complexity" evidence="3">
    <location>
        <begin position="96"/>
        <end position="118"/>
    </location>
</feature>
<feature type="compositionally biased region" description="Low complexity" evidence="3">
    <location>
        <begin position="505"/>
        <end position="516"/>
    </location>
</feature>
<feature type="glycosylation site" description="N-linked (GlcNAc...) asparagine; by host" evidence="2">
    <location>
        <position position="165"/>
    </location>
</feature>
<feature type="glycosylation site" description="N-linked (GlcNAc...) asparagine; by host" evidence="2">
    <location>
        <position position="275"/>
    </location>
</feature>
<feature type="glycosylation site" description="N-linked (GlcNAc...) asparagine; by host" evidence="2">
    <location>
        <position position="380"/>
    </location>
</feature>
<feature type="glycosylation site" description="N-linked (GlcNAc...) asparagine; by host" evidence="2">
    <location>
        <position position="423"/>
    </location>
</feature>
<feature type="glycosylation site" description="N-linked (GlcNAc...) asparagine; by host" evidence="2">
    <location>
        <position position="497"/>
    </location>
</feature>
<feature type="glycosylation site" description="N-linked (GlcNAc...) asparagine; by host" evidence="2">
    <location>
        <position position="514"/>
    </location>
</feature>
<feature type="glycosylation site" description="N-linked (GlcNAc...) asparagine; by host" evidence="2">
    <location>
        <position position="515"/>
    </location>
</feature>
<feature type="glycosylation site" description="N-linked (GlcNAc...) asparagine; by host" evidence="2">
    <location>
        <position position="560"/>
    </location>
</feature>
<feature type="glycosylation site" description="N-linked (GlcNAc...) asparagine; by host" evidence="2">
    <location>
        <position position="727"/>
    </location>
</feature>
<feature type="glycosylation site" description="N-linked (GlcNAc...) asparagine; by host" evidence="2">
    <location>
        <position position="749"/>
    </location>
</feature>
<feature type="disulfide bond" evidence="2">
    <location>
        <begin position="140"/>
        <end position="647"/>
    </location>
</feature>
<feature type="disulfide bond" evidence="2">
    <location>
        <begin position="157"/>
        <end position="603"/>
    </location>
</feature>
<feature type="disulfide bond" evidence="2">
    <location>
        <begin position="231"/>
        <end position="296"/>
    </location>
</feature>
<feature type="disulfide bond" evidence="2">
    <location>
        <begin position="389"/>
        <end position="437"/>
    </location>
</feature>
<feature type="disulfide bond" evidence="2">
    <location>
        <begin position="668"/>
        <end position="708"/>
    </location>
</feature>
<accession>P18551</accession>
<protein>
    <recommendedName>
        <fullName evidence="2">Envelope glycoprotein B</fullName>
        <shortName evidence="2">gB</shortName>
    </recommendedName>
</protein>
<organism>
    <name type="scientific">Equine herpesvirus 1 (strain AB1)</name>
    <name type="common">EHV-1</name>
    <name type="synonym">Equine abortion virus</name>
    <dbReference type="NCBI Taxonomy" id="10328"/>
    <lineage>
        <taxon>Viruses</taxon>
        <taxon>Duplodnaviria</taxon>
        <taxon>Heunggongvirae</taxon>
        <taxon>Peploviricota</taxon>
        <taxon>Herviviricetes</taxon>
        <taxon>Herpesvirales</taxon>
        <taxon>Orthoherpesviridae</taxon>
        <taxon>Alphaherpesvirinae</taxon>
        <taxon>Varicellovirus</taxon>
        <taxon>Varicellovirus equidalpha1</taxon>
        <taxon>Equid alphaherpesvirus 1</taxon>
    </lineage>
</organism>
<evidence type="ECO:0000255" key="1"/>
<evidence type="ECO:0000255" key="2">
    <source>
        <dbReference type="HAMAP-Rule" id="MF_04032"/>
    </source>
</evidence>
<evidence type="ECO:0000256" key="3">
    <source>
        <dbReference type="SAM" id="MobiDB-lite"/>
    </source>
</evidence>
<evidence type="ECO:0000305" key="4"/>
<sequence length="980" mass="109736">MSSGCRSVGGSTWGNWRGDGGDLRQRRVLSPVCSAPAAGSWIGSQLGNVGNLLATPHPLGKPASSRVGTIVLACLLLFGSCVVRAVPTTPSPPTSTPTSMSTHSHGTVDPTLLPTETPDPLRLAVRESGILAEDGDFYTCPPPTGSTVVRIEPPRTCPKFDLGRNFTEGIAVIFKENIAPYKFRANVYYKDIVVTRVWKGYSHTSLSDRYNDRVPVSVEEIFGLIDSKGKCSSKAEYLRDNIMHHAYHDDEDEVELDLVPSKFATPGARAWQTTNDTTSYVGWMPWRHYTSTSVNCIVEEVEARSVYPYDSFALSTGDIVYASPFYGLRAAARIEHNSYAQDSFRQVEGYRPRDLDSKLQAEEPVTKNFITTPHVTVSWNWTEKKVEACTLTKWKEVDELVRDEFRGSYRFTIRSISSTFISNTTQFKLESAPLTECVSKEAKEAIDSIYKKQYESTHVFSGDVEYYLARGGFLIAFRPMLSNELARLYLNELVRSNRTYDLKNLLNPNANNNNNTTRRRRSLLSVPEPQPTQDGVHREQILHRLHKRAVEATAGTDSSNVTAKQLELIKTTSSIEFAMLQFAYDHIQSHVNEMLSRIATAWCTLQNKERTLWNEMVKINPSAIVSATLDERVAARVLGDVIAITHCAKIEGNVYLQNSMRSMDSNTCYSRPPVTFTITKNANNRGSIEGQLGEENEIFTERKLIEPCALNQKRYFKFGKEYVYYENYTFVRKVPPTEIEVISTYVELNLTLLEDREFLPLEVYTRAELEDTGLLDYSEIQRRNQLHALRFYDIDSVVNVDNTAVIMQGIASFFKGLGKVGEAVGTLVLAAAGAVVSTVSGIASFLNNPFGGLAIGLLVIAGLVAAFFAYRYVMQIRSNPMKALYPITTKALKNKAKTSYGQNEEDDGSDFDEAKLEEAREMIKYMSMVSALEKQEKKAIKKNSGVGLIASNVSKLALRRRGPKYTRLQQNDTMENEKMV</sequence>
<organismHost>
    <name type="scientific">Equus caballus</name>
    <name type="common">Horse</name>
    <dbReference type="NCBI Taxonomy" id="9796"/>
</organismHost>
<reference key="1">
    <citation type="submission" date="1990-07" db="EMBL/GenBank/DDBJ databases">
        <title>Molecular analysis of the Equine herpesvirus type-1 strain Ab1, glycoprotein B gene and its expression in COS cells.</title>
        <authorList>
            <person name="Bonass W.A."/>
            <person name="Elton D.M."/>
            <person name="Stocks J.M."/>
            <person name="Killington R.A."/>
            <person name="Meredith D.M."/>
            <person name="Halliburton I.W."/>
        </authorList>
    </citation>
    <scope>NUCLEOTIDE SEQUENCE [GENOMIC DNA]</scope>
</reference>
<name>GB_EHV1A</name>
<dbReference type="EMBL" id="M36298">
    <property type="protein sequence ID" value="AAA46068.1"/>
    <property type="molecule type" value="Genomic_DNA"/>
</dbReference>
<dbReference type="SMR" id="P18551"/>
<dbReference type="GlyCosmos" id="P18551">
    <property type="glycosylation" value="10 sites, No reported glycans"/>
</dbReference>
<dbReference type="GO" id="GO:0044175">
    <property type="term" value="C:host cell endosome membrane"/>
    <property type="evidence" value="ECO:0007669"/>
    <property type="project" value="UniProtKB-SubCell"/>
</dbReference>
<dbReference type="GO" id="GO:0044178">
    <property type="term" value="C:host cell Golgi membrane"/>
    <property type="evidence" value="ECO:0007669"/>
    <property type="project" value="UniProtKB-SubCell"/>
</dbReference>
<dbReference type="GO" id="GO:0020002">
    <property type="term" value="C:host cell plasma membrane"/>
    <property type="evidence" value="ECO:0007669"/>
    <property type="project" value="UniProtKB-SubCell"/>
</dbReference>
<dbReference type="GO" id="GO:0016020">
    <property type="term" value="C:membrane"/>
    <property type="evidence" value="ECO:0007669"/>
    <property type="project" value="UniProtKB-KW"/>
</dbReference>
<dbReference type="GO" id="GO:0019031">
    <property type="term" value="C:viral envelope"/>
    <property type="evidence" value="ECO:0007669"/>
    <property type="project" value="UniProtKB-KW"/>
</dbReference>
<dbReference type="GO" id="GO:0055036">
    <property type="term" value="C:virion membrane"/>
    <property type="evidence" value="ECO:0007669"/>
    <property type="project" value="UniProtKB-SubCell"/>
</dbReference>
<dbReference type="GO" id="GO:0046718">
    <property type="term" value="P:symbiont entry into host cell"/>
    <property type="evidence" value="ECO:0007669"/>
    <property type="project" value="UniProtKB-KW"/>
</dbReference>
<dbReference type="GO" id="GO:0019062">
    <property type="term" value="P:virion attachment to host cell"/>
    <property type="evidence" value="ECO:0007669"/>
    <property type="project" value="UniProtKB-KW"/>
</dbReference>
<dbReference type="Gene3D" id="1.20.5.1890">
    <property type="match status" value="1"/>
</dbReference>
<dbReference type="Gene3D" id="2.30.29.100">
    <property type="match status" value="1"/>
</dbReference>
<dbReference type="Gene3D" id="2.30.30.1230">
    <property type="match status" value="1"/>
</dbReference>
<dbReference type="Gene3D" id="6.10.250.3280">
    <property type="match status" value="1"/>
</dbReference>
<dbReference type="HAMAP" id="MF_04032">
    <property type="entry name" value="HSV_GB"/>
    <property type="match status" value="1"/>
</dbReference>
<dbReference type="InterPro" id="IPR035377">
    <property type="entry name" value="Glycoprot_B_PH1"/>
</dbReference>
<dbReference type="InterPro" id="IPR035381">
    <property type="entry name" value="Glycoprot_B_PH2"/>
</dbReference>
<dbReference type="InterPro" id="IPR038631">
    <property type="entry name" value="Glycoprot_B_PH2_sf"/>
</dbReference>
<dbReference type="InterPro" id="IPR055341">
    <property type="entry name" value="Glycoprotein_B_ecto_C"/>
</dbReference>
<dbReference type="InterPro" id="IPR000234">
    <property type="entry name" value="Herpes_Glycoprot_B"/>
</dbReference>
<dbReference type="Pfam" id="PF17416">
    <property type="entry name" value="Glycoprot_B_PH1"/>
    <property type="match status" value="1"/>
</dbReference>
<dbReference type="Pfam" id="PF17417">
    <property type="entry name" value="Glycoprot_B_PH2"/>
    <property type="match status" value="1"/>
</dbReference>
<dbReference type="Pfam" id="PF00606">
    <property type="entry name" value="Glycoprotein_B"/>
    <property type="match status" value="1"/>
</dbReference>
<dbReference type="SUPFAM" id="SSF161008">
    <property type="entry name" value="Viral glycoprotein ectodomain-like"/>
    <property type="match status" value="1"/>
</dbReference>
<comment type="function">
    <text evidence="2">Envelope glycoprotein that forms spikes at the surface of virion envelope. Essential for the initial attachment to heparan sulfate moieties of the host cell surface proteoglycans. Involved in fusion of viral and cellular membranes leading to virus entry into the host cell. Following initial binding to its host receptors, membrane fusion is mediated by the fusion machinery composed at least of gB and the heterodimer gH/gL. May be involved in the fusion between the virion envelope and the outer nuclear membrane during virion egress.</text>
</comment>
<comment type="subunit">
    <text evidence="2">Homotrimer; disulfide-linked. Binds to heparan sulfate proteoglycans. Interacts with gH/gL heterodimer.</text>
</comment>
<comment type="subcellular location">
    <subcellularLocation>
        <location evidence="2">Virion membrane</location>
        <topology evidence="2">Single-pass type I membrane protein</topology>
    </subcellularLocation>
    <subcellularLocation>
        <location evidence="2">Host cell membrane</location>
        <topology evidence="2">Single-pass type I membrane protein</topology>
    </subcellularLocation>
    <subcellularLocation>
        <location evidence="2">Host endosome membrane</location>
        <topology evidence="2">Single-pass type I membrane protein</topology>
    </subcellularLocation>
    <subcellularLocation>
        <location evidence="2">Host Golgi apparatus membrane</location>
        <topology evidence="2">Single-pass type I membrane protein</topology>
    </subcellularLocation>
    <text evidence="2">During virion morphogenesis, this protein probably accumulates in the endosomes and trans-Golgi where secondary envelopment occurs. It is probably transported to the cell surface from where it is endocytosed and directed to the trans-Golgi network (TGN).</text>
</comment>
<comment type="PTM">
    <text evidence="4">A proteolytic cleavage by host furin generates two subunits that remain linked by disulfide bonds.</text>
</comment>
<comment type="similarity">
    <text evidence="2">Belongs to the herpesviridae glycoprotein B family.</text>
</comment>
<keyword id="KW-1015">Disulfide bond</keyword>
<keyword id="KW-0325">Glycoprotein</keyword>
<keyword id="KW-1032">Host cell membrane</keyword>
<keyword id="KW-1039">Host endosome</keyword>
<keyword id="KW-1040">Host Golgi apparatus</keyword>
<keyword id="KW-1043">Host membrane</keyword>
<keyword id="KW-0945">Host-virus interaction</keyword>
<keyword id="KW-0472">Membrane</keyword>
<keyword id="KW-0732">Signal</keyword>
<keyword id="KW-0812">Transmembrane</keyword>
<keyword id="KW-1133">Transmembrane helix</keyword>
<keyword id="KW-1161">Viral attachment to host cell</keyword>
<keyword id="KW-0261">Viral envelope protein</keyword>
<keyword id="KW-0946">Virion</keyword>
<keyword id="KW-1160">Virus entry into host cell</keyword>
<gene>
    <name evidence="2" type="primary">gB</name>
    <name type="synonym">GP14</name>
</gene>